<protein>
    <recommendedName>
        <fullName evidence="1">Probable disulfide formation protein</fullName>
    </recommendedName>
    <alternativeName>
        <fullName evidence="1">Disulfide oxidoreductase</fullName>
    </alternativeName>
    <alternativeName>
        <fullName evidence="1">Thiol-disulfide oxidoreductase</fullName>
    </alternativeName>
</protein>
<organism>
    <name type="scientific">Coxiella burnetii (strain Dugway 5J108-111)</name>
    <dbReference type="NCBI Taxonomy" id="434922"/>
    <lineage>
        <taxon>Bacteria</taxon>
        <taxon>Pseudomonadati</taxon>
        <taxon>Pseudomonadota</taxon>
        <taxon>Gammaproteobacteria</taxon>
        <taxon>Legionellales</taxon>
        <taxon>Coxiellaceae</taxon>
        <taxon>Coxiella</taxon>
    </lineage>
</organism>
<proteinExistence type="inferred from homology"/>
<reference key="1">
    <citation type="journal article" date="2009" name="Infect. Immun.">
        <title>Comparative genomics reveal extensive transposon-mediated genomic plasticity and diversity among potential effector proteins within the genus Coxiella.</title>
        <authorList>
            <person name="Beare P.A."/>
            <person name="Unsworth N."/>
            <person name="Andoh M."/>
            <person name="Voth D.E."/>
            <person name="Omsland A."/>
            <person name="Gilk S.D."/>
            <person name="Williams K.P."/>
            <person name="Sobral B.W."/>
            <person name="Kupko J.J. III"/>
            <person name="Porcella S.F."/>
            <person name="Samuel J.E."/>
            <person name="Heinzen R.A."/>
        </authorList>
    </citation>
    <scope>NUCLEOTIDE SEQUENCE [LARGE SCALE GENOMIC DNA]</scope>
    <source>
        <strain>Dugway 5J108-111</strain>
    </source>
</reference>
<feature type="chain" id="PRO_1000114971" description="Probable disulfide formation protein">
    <location>
        <begin position="1"/>
        <end position="147"/>
    </location>
</feature>
<feature type="transmembrane region" description="Helical" evidence="1">
    <location>
        <begin position="9"/>
        <end position="28"/>
    </location>
</feature>
<feature type="transmembrane region" description="Helical" evidence="1">
    <location>
        <begin position="43"/>
        <end position="62"/>
    </location>
</feature>
<feature type="transmembrane region" description="Helical" evidence="1">
    <location>
        <begin position="69"/>
        <end position="86"/>
    </location>
</feature>
<feature type="transmembrane region" description="Helical" evidence="1">
    <location>
        <begin position="115"/>
        <end position="138"/>
    </location>
</feature>
<feature type="disulfide bond" description="Redox-active" evidence="1">
    <location>
        <begin position="38"/>
        <end position="41"/>
    </location>
</feature>
<feature type="disulfide bond" description="Redox-active" evidence="1">
    <location>
        <begin position="99"/>
        <end position="106"/>
    </location>
</feature>
<gene>
    <name type="ordered locus">CBUD_0951</name>
</gene>
<keyword id="KW-0997">Cell inner membrane</keyword>
<keyword id="KW-1003">Cell membrane</keyword>
<keyword id="KW-0143">Chaperone</keyword>
<keyword id="KW-1015">Disulfide bond</keyword>
<keyword id="KW-0249">Electron transport</keyword>
<keyword id="KW-0472">Membrane</keyword>
<keyword id="KW-0560">Oxidoreductase</keyword>
<keyword id="KW-0676">Redox-active center</keyword>
<keyword id="KW-0812">Transmembrane</keyword>
<keyword id="KW-1133">Transmembrane helix</keyword>
<keyword id="KW-0813">Transport</keyword>
<name>BDBC_COXBN</name>
<sequence>MMVSRLLKNYSLYFAWLTALIATLGSLYLSLVRHIPVCDLCWYQRVCIYPLTILLGIAAYRTDRGVVKYALPLVVLGFLFSVYQYLQQMIPGFAPINLCGSTSPHCSEIHWEIFGFITLPFLGMLATLIMSFFLIMAFYSLDKRLAN</sequence>
<comment type="function">
    <text evidence="1">Required for disulfide bond formation in some proteins.</text>
</comment>
<comment type="subcellular location">
    <subcellularLocation>
        <location evidence="1">Cell inner membrane</location>
        <topology evidence="1">Multi-pass membrane protein</topology>
    </subcellularLocation>
</comment>
<comment type="similarity">
    <text evidence="1">Belongs to the DsbB family. BdbC subfamily.</text>
</comment>
<evidence type="ECO:0000255" key="1">
    <source>
        <dbReference type="HAMAP-Rule" id="MF_00287"/>
    </source>
</evidence>
<accession>A9KFZ1</accession>
<dbReference type="EMBL" id="CP000733">
    <property type="protein sequence ID" value="ABS77076.2"/>
    <property type="molecule type" value="Genomic_DNA"/>
</dbReference>
<dbReference type="RefSeq" id="WP_010957868.1">
    <property type="nucleotide sequence ID" value="NC_009727.1"/>
</dbReference>
<dbReference type="KEGG" id="cbd:CBUD_0951"/>
<dbReference type="HOGENOM" id="CLU_128688_0_0_6"/>
<dbReference type="Proteomes" id="UP000008555">
    <property type="component" value="Chromosome"/>
</dbReference>
<dbReference type="GO" id="GO:0005886">
    <property type="term" value="C:plasma membrane"/>
    <property type="evidence" value="ECO:0007669"/>
    <property type="project" value="UniProtKB-SubCell"/>
</dbReference>
<dbReference type="GO" id="GO:0015035">
    <property type="term" value="F:protein-disulfide reductase activity"/>
    <property type="evidence" value="ECO:0007669"/>
    <property type="project" value="UniProtKB-UniRule"/>
</dbReference>
<dbReference type="GO" id="GO:0006457">
    <property type="term" value="P:protein folding"/>
    <property type="evidence" value="ECO:0007669"/>
    <property type="project" value="InterPro"/>
</dbReference>
<dbReference type="Gene3D" id="1.20.1550.10">
    <property type="entry name" value="DsbB-like"/>
    <property type="match status" value="1"/>
</dbReference>
<dbReference type="HAMAP" id="MF_00287">
    <property type="entry name" value="BdbC"/>
    <property type="match status" value="1"/>
</dbReference>
<dbReference type="InterPro" id="IPR003752">
    <property type="entry name" value="DiS_bond_form_DsbB/BdbC"/>
</dbReference>
<dbReference type="InterPro" id="IPR012187">
    <property type="entry name" value="Disulphide_bond_form_BdbC"/>
</dbReference>
<dbReference type="InterPro" id="IPR023380">
    <property type="entry name" value="DsbB-like_sf"/>
</dbReference>
<dbReference type="PANTHER" id="PTHR43469">
    <property type="entry name" value="DISULFIDE FORMATION PROTEIN-RELATED"/>
    <property type="match status" value="1"/>
</dbReference>
<dbReference type="PANTHER" id="PTHR43469:SF1">
    <property type="entry name" value="SPBETA PROPHAGE-DERIVED DISULFIDE BOND FORMATION PROTEIN B"/>
    <property type="match status" value="1"/>
</dbReference>
<dbReference type="Pfam" id="PF02600">
    <property type="entry name" value="DsbB"/>
    <property type="match status" value="1"/>
</dbReference>
<dbReference type="PIRSF" id="PIRSF036659">
    <property type="entry name" value="BdbC"/>
    <property type="match status" value="1"/>
</dbReference>
<dbReference type="SUPFAM" id="SSF158442">
    <property type="entry name" value="DsbB-like"/>
    <property type="match status" value="1"/>
</dbReference>